<reference key="1">
    <citation type="journal article" date="2002" name="J. Bacteriol.">
        <title>Whole-genome comparison of Mycobacterium tuberculosis clinical and laboratory strains.</title>
        <authorList>
            <person name="Fleischmann R.D."/>
            <person name="Alland D."/>
            <person name="Eisen J.A."/>
            <person name="Carpenter L."/>
            <person name="White O."/>
            <person name="Peterson J.D."/>
            <person name="DeBoy R.T."/>
            <person name="Dodson R.J."/>
            <person name="Gwinn M.L."/>
            <person name="Haft D.H."/>
            <person name="Hickey E.K."/>
            <person name="Kolonay J.F."/>
            <person name="Nelson W.C."/>
            <person name="Umayam L.A."/>
            <person name="Ermolaeva M.D."/>
            <person name="Salzberg S.L."/>
            <person name="Delcher A."/>
            <person name="Utterback T.R."/>
            <person name="Weidman J.F."/>
            <person name="Khouri H.M."/>
            <person name="Gill J."/>
            <person name="Mikula A."/>
            <person name="Bishai W."/>
            <person name="Jacobs W.R. Jr."/>
            <person name="Venter J.C."/>
            <person name="Fraser C.M."/>
        </authorList>
    </citation>
    <scope>NUCLEOTIDE SEQUENCE [LARGE SCALE GENOMIC DNA]</scope>
    <source>
        <strain>CDC 1551 / Oshkosh</strain>
    </source>
</reference>
<accession>P9WPX2</accession>
<accession>L0TGI4</accession>
<accession>O69676</accession>
<accession>P0A4Z8</accession>
<accession>P47731</accession>
<accession>P97048</accession>
<accession>P97181</accession>
<name>AK_MYCTO</name>
<evidence type="ECO:0000250" key="1"/>
<evidence type="ECO:0000255" key="2">
    <source>
        <dbReference type="PROSITE-ProRule" id="PRU01007"/>
    </source>
</evidence>
<evidence type="ECO:0000305" key="3"/>
<gene>
    <name type="primary">ask</name>
    <name type="ordered locus">MT3812</name>
</gene>
<proteinExistence type="inferred from homology"/>
<comment type="function">
    <text evidence="1">Catalyzes the phosphorylation of the beta-carboxyl group of aspartic acid with ATP to yield 4-phospho-L-aspartate, which is involved in the branched biosynthetic pathway leading to the biosynthesis of amino acids lysine, threonine, isoleucine and methionine.</text>
</comment>
<comment type="catalytic activity">
    <reaction>
        <text>L-aspartate + ATP = 4-phospho-L-aspartate + ADP</text>
        <dbReference type="Rhea" id="RHEA:23776"/>
        <dbReference type="ChEBI" id="CHEBI:29991"/>
        <dbReference type="ChEBI" id="CHEBI:30616"/>
        <dbReference type="ChEBI" id="CHEBI:57535"/>
        <dbReference type="ChEBI" id="CHEBI:456216"/>
        <dbReference type="EC" id="2.7.2.4"/>
    </reaction>
</comment>
<comment type="pathway">
    <text>Amino-acid biosynthesis; L-lysine biosynthesis via DAP pathway; (S)-tetrahydrodipicolinate from L-aspartate: step 1/4.</text>
</comment>
<comment type="pathway">
    <text>Amino-acid biosynthesis; L-methionine biosynthesis via de novo pathway; L-homoserine from L-aspartate: step 1/3.</text>
</comment>
<comment type="pathway">
    <text>Amino-acid biosynthesis; L-threonine biosynthesis; L-threonine from L-aspartate: step 1/5.</text>
</comment>
<comment type="similarity">
    <text evidence="3">Belongs to the aspartokinase family.</text>
</comment>
<protein>
    <recommendedName>
        <fullName>Aspartokinase</fullName>
        <ecNumber>2.7.2.4</ecNumber>
    </recommendedName>
    <alternativeName>
        <fullName>Aspartate kinase</fullName>
        <shortName>ASK</shortName>
    </alternativeName>
</protein>
<keyword id="KW-0028">Amino-acid biosynthesis</keyword>
<keyword id="KW-0067">ATP-binding</keyword>
<keyword id="KW-0220">Diaminopimelate biosynthesis</keyword>
<keyword id="KW-0418">Kinase</keyword>
<keyword id="KW-0457">Lysine biosynthesis</keyword>
<keyword id="KW-0547">Nucleotide-binding</keyword>
<keyword id="KW-1185">Reference proteome</keyword>
<keyword id="KW-0677">Repeat</keyword>
<keyword id="KW-0791">Threonine biosynthesis</keyword>
<keyword id="KW-0808">Transferase</keyword>
<sequence>MALVVQKYGGSSVADAERIRRVAERIVATKKQGNDVVVVVSAMGDTTDDLLDLAQQVCPAPPPRELDMLLTAGERISNALVAMAIESLGAHARSFTGSQAGVITTGTHGNAKIIDVTPGRLQTALEEGRVVLVAGFQGVSQDTKDVTTLGRGGSDTTAVAMAAALGADVCEIYTDVDGIFSADPRIVRNARKLDTVTFEEMLEMAACGAKVLMLRCVEYARRHNIPVHVRSSYSDRPGTVVVGSIKDVPMEDPILTGVAHDRSEAKVTIVGLPDIPGYAAKVFRAVADADVNIDMVLQNVSKVEDGKTDITFTCSRDVGPAAVEKLDSLRNEIGFSQLLYDDHIGKVSLIGAGMRSHPGVTATFCEALAAVGVNIELISTSEIRISVLCRDTELDKAVVALHEAFGLGGDEEATVYAGTGR</sequence>
<organism>
    <name type="scientific">Mycobacterium tuberculosis (strain CDC 1551 / Oshkosh)</name>
    <dbReference type="NCBI Taxonomy" id="83331"/>
    <lineage>
        <taxon>Bacteria</taxon>
        <taxon>Bacillati</taxon>
        <taxon>Actinomycetota</taxon>
        <taxon>Actinomycetes</taxon>
        <taxon>Mycobacteriales</taxon>
        <taxon>Mycobacteriaceae</taxon>
        <taxon>Mycobacterium</taxon>
        <taxon>Mycobacterium tuberculosis complex</taxon>
    </lineage>
</organism>
<dbReference type="EC" id="2.7.2.4"/>
<dbReference type="EMBL" id="AE000516">
    <property type="protein sequence ID" value="AAK48180.1"/>
    <property type="molecule type" value="Genomic_DNA"/>
</dbReference>
<dbReference type="PIR" id="F70794">
    <property type="entry name" value="F70794"/>
</dbReference>
<dbReference type="RefSeq" id="WP_003419828.1">
    <property type="nucleotide sequence ID" value="NZ_KK341227.1"/>
</dbReference>
<dbReference type="SMR" id="P9WPX2"/>
<dbReference type="KEGG" id="mtc:MT3812"/>
<dbReference type="PATRIC" id="fig|83331.31.peg.4105"/>
<dbReference type="HOGENOM" id="CLU_009116_3_2_11"/>
<dbReference type="UniPathway" id="UPA00034">
    <property type="reaction ID" value="UER00015"/>
</dbReference>
<dbReference type="UniPathway" id="UPA00050">
    <property type="reaction ID" value="UER00461"/>
</dbReference>
<dbReference type="UniPathway" id="UPA00051">
    <property type="reaction ID" value="UER00462"/>
</dbReference>
<dbReference type="Proteomes" id="UP000001020">
    <property type="component" value="Chromosome"/>
</dbReference>
<dbReference type="GO" id="GO:0005829">
    <property type="term" value="C:cytosol"/>
    <property type="evidence" value="ECO:0007669"/>
    <property type="project" value="TreeGrafter"/>
</dbReference>
<dbReference type="GO" id="GO:0004072">
    <property type="term" value="F:aspartate kinase activity"/>
    <property type="evidence" value="ECO:0007669"/>
    <property type="project" value="UniProtKB-EC"/>
</dbReference>
<dbReference type="GO" id="GO:0005524">
    <property type="term" value="F:ATP binding"/>
    <property type="evidence" value="ECO:0007669"/>
    <property type="project" value="UniProtKB-KW"/>
</dbReference>
<dbReference type="GO" id="GO:0019877">
    <property type="term" value="P:diaminopimelate biosynthetic process"/>
    <property type="evidence" value="ECO:0007669"/>
    <property type="project" value="UniProtKB-KW"/>
</dbReference>
<dbReference type="GO" id="GO:0009090">
    <property type="term" value="P:homoserine biosynthetic process"/>
    <property type="evidence" value="ECO:0007669"/>
    <property type="project" value="TreeGrafter"/>
</dbReference>
<dbReference type="GO" id="GO:0009089">
    <property type="term" value="P:lysine biosynthetic process via diaminopimelate"/>
    <property type="evidence" value="ECO:0007669"/>
    <property type="project" value="UniProtKB-UniPathway"/>
</dbReference>
<dbReference type="GO" id="GO:0009088">
    <property type="term" value="P:threonine biosynthetic process"/>
    <property type="evidence" value="ECO:0007669"/>
    <property type="project" value="UniProtKB-UniPathway"/>
</dbReference>
<dbReference type="CDD" id="cd04261">
    <property type="entry name" value="AAK_AKii-LysC-BS"/>
    <property type="match status" value="1"/>
</dbReference>
<dbReference type="CDD" id="cd04923">
    <property type="entry name" value="ACT_AK-LysC-DapG-like_2"/>
    <property type="match status" value="1"/>
</dbReference>
<dbReference type="CDD" id="cd04913">
    <property type="entry name" value="ACT_AKii-LysC-BS-like_1"/>
    <property type="match status" value="1"/>
</dbReference>
<dbReference type="FunFam" id="3.30.2130.10:FF:000002">
    <property type="entry name" value="Aspartokinase"/>
    <property type="match status" value="1"/>
</dbReference>
<dbReference type="FunFam" id="3.40.1160.10:FF:000002">
    <property type="entry name" value="Aspartokinase"/>
    <property type="match status" value="1"/>
</dbReference>
<dbReference type="Gene3D" id="3.40.1160.10">
    <property type="entry name" value="Acetylglutamate kinase-like"/>
    <property type="match status" value="1"/>
</dbReference>
<dbReference type="Gene3D" id="3.30.2130.10">
    <property type="entry name" value="VC0802-like"/>
    <property type="match status" value="1"/>
</dbReference>
<dbReference type="InterPro" id="IPR036393">
    <property type="entry name" value="AceGlu_kinase-like_sf"/>
</dbReference>
<dbReference type="InterPro" id="IPR045865">
    <property type="entry name" value="ACT-like_dom_sf"/>
</dbReference>
<dbReference type="InterPro" id="IPR054352">
    <property type="entry name" value="ACT_Aspartokinase"/>
</dbReference>
<dbReference type="InterPro" id="IPR002912">
    <property type="entry name" value="ACT_dom"/>
</dbReference>
<dbReference type="InterPro" id="IPR041740">
    <property type="entry name" value="AKii-LysC-BS"/>
</dbReference>
<dbReference type="InterPro" id="IPR001048">
    <property type="entry name" value="Asp/Glu/Uridylate_kinase"/>
</dbReference>
<dbReference type="InterPro" id="IPR005260">
    <property type="entry name" value="Asp_kin_monofn"/>
</dbReference>
<dbReference type="InterPro" id="IPR001341">
    <property type="entry name" value="Asp_kinase"/>
</dbReference>
<dbReference type="InterPro" id="IPR018042">
    <property type="entry name" value="Aspartate_kinase_CS"/>
</dbReference>
<dbReference type="NCBIfam" id="TIGR00656">
    <property type="entry name" value="asp_kin_monofn"/>
    <property type="match status" value="1"/>
</dbReference>
<dbReference type="NCBIfam" id="TIGR00657">
    <property type="entry name" value="asp_kinases"/>
    <property type="match status" value="1"/>
</dbReference>
<dbReference type="NCBIfam" id="NF005153">
    <property type="entry name" value="PRK06635.1-1"/>
    <property type="match status" value="1"/>
</dbReference>
<dbReference type="NCBIfam" id="NF005154">
    <property type="entry name" value="PRK06635.1-2"/>
    <property type="match status" value="1"/>
</dbReference>
<dbReference type="NCBIfam" id="NF005155">
    <property type="entry name" value="PRK06635.1-4"/>
    <property type="match status" value="1"/>
</dbReference>
<dbReference type="PANTHER" id="PTHR21499">
    <property type="entry name" value="ASPARTATE KINASE"/>
    <property type="match status" value="1"/>
</dbReference>
<dbReference type="PANTHER" id="PTHR21499:SF3">
    <property type="entry name" value="ASPARTOKINASE"/>
    <property type="match status" value="1"/>
</dbReference>
<dbReference type="Pfam" id="PF00696">
    <property type="entry name" value="AA_kinase"/>
    <property type="match status" value="1"/>
</dbReference>
<dbReference type="Pfam" id="PF01842">
    <property type="entry name" value="ACT"/>
    <property type="match status" value="1"/>
</dbReference>
<dbReference type="Pfam" id="PF22468">
    <property type="entry name" value="ACT_9"/>
    <property type="match status" value="1"/>
</dbReference>
<dbReference type="PIRSF" id="PIRSF000726">
    <property type="entry name" value="Asp_kin"/>
    <property type="match status" value="1"/>
</dbReference>
<dbReference type="SUPFAM" id="SSF55021">
    <property type="entry name" value="ACT-like"/>
    <property type="match status" value="2"/>
</dbReference>
<dbReference type="SUPFAM" id="SSF53633">
    <property type="entry name" value="Carbamate kinase-like"/>
    <property type="match status" value="1"/>
</dbReference>
<dbReference type="PROSITE" id="PS51671">
    <property type="entry name" value="ACT"/>
    <property type="match status" value="1"/>
</dbReference>
<dbReference type="PROSITE" id="PS00324">
    <property type="entry name" value="ASPARTOKINASE"/>
    <property type="match status" value="1"/>
</dbReference>
<feature type="chain" id="PRO_0000426877" description="Aspartokinase">
    <location>
        <begin position="1"/>
        <end position="421"/>
    </location>
</feature>
<feature type="domain" description="ACT 1" evidence="2">
    <location>
        <begin position="267"/>
        <end position="348"/>
    </location>
</feature>
<feature type="domain" description="ACT 2" evidence="2">
    <location>
        <begin position="349"/>
        <end position="421"/>
    </location>
</feature>
<feature type="binding site" evidence="1">
    <location>
        <begin position="7"/>
        <end position="10"/>
    </location>
    <ligand>
        <name>ATP</name>
        <dbReference type="ChEBI" id="CHEBI:30616"/>
    </ligand>
</feature>
<feature type="binding site" evidence="1">
    <location>
        <begin position="25"/>
        <end position="30"/>
    </location>
    <ligand>
        <name>substrate</name>
    </ligand>
</feature>
<feature type="binding site" evidence="1">
    <location>
        <position position="41"/>
    </location>
    <ligand>
        <name>ATP</name>
        <dbReference type="ChEBI" id="CHEBI:30616"/>
    </ligand>
</feature>
<feature type="binding site" evidence="1">
    <location>
        <begin position="45"/>
        <end position="49"/>
    </location>
    <ligand>
        <name>substrate</name>
    </ligand>
</feature>
<feature type="binding site" evidence="1">
    <location>
        <position position="74"/>
    </location>
    <ligand>
        <name>substrate</name>
    </ligand>
</feature>
<feature type="binding site" evidence="1">
    <location>
        <begin position="125"/>
        <end position="126"/>
    </location>
    <ligand>
        <name>substrate</name>
    </ligand>
</feature>
<feature type="binding site" evidence="1">
    <location>
        <begin position="151"/>
        <end position="154"/>
    </location>
    <ligand>
        <name>substrate</name>
    </ligand>
</feature>
<feature type="binding site" evidence="1">
    <location>
        <position position="154"/>
    </location>
    <ligand>
        <name>substrate</name>
    </ligand>
</feature>
<feature type="binding site" evidence="1">
    <location>
        <begin position="174"/>
        <end position="175"/>
    </location>
    <ligand>
        <name>ATP</name>
        <dbReference type="ChEBI" id="CHEBI:30616"/>
    </ligand>
</feature>
<feature type="binding site" evidence="1">
    <location>
        <begin position="180"/>
        <end position="185"/>
    </location>
    <ligand>
        <name>ATP</name>
        <dbReference type="ChEBI" id="CHEBI:30616"/>
    </ligand>
</feature>
<feature type="binding site" evidence="1">
    <location>
        <position position="210"/>
    </location>
    <ligand>
        <name>ATP</name>
        <dbReference type="ChEBI" id="CHEBI:30616"/>
    </ligand>
</feature>
<feature type="binding site" evidence="1">
    <location>
        <position position="274"/>
    </location>
    <ligand>
        <name>substrate</name>
    </ligand>
</feature>
<feature type="binding site" evidence="1">
    <location>
        <begin position="292"/>
        <end position="294"/>
    </location>
    <ligand>
        <name>substrate</name>
    </ligand>
</feature>
<feature type="binding site" evidence="1">
    <location>
        <position position="298"/>
    </location>
    <ligand>
        <name>substrate</name>
    </ligand>
</feature>
<feature type="binding site" evidence="1">
    <location>
        <begin position="360"/>
        <end position="361"/>
    </location>
    <ligand>
        <name>substrate</name>
    </ligand>
</feature>
<feature type="binding site" evidence="1">
    <location>
        <begin position="374"/>
        <end position="375"/>
    </location>
    <ligand>
        <name>substrate</name>
    </ligand>
</feature>
<feature type="binding site" evidence="1">
    <location>
        <begin position="381"/>
        <end position="382"/>
    </location>
    <ligand>
        <name>substrate</name>
    </ligand>
</feature>
<feature type="site" description="Contribution to the catalysis" evidence="1">
    <location>
        <position position="7"/>
    </location>
</feature>
<feature type="site" description="Contribution to the catalysis" evidence="1">
    <location>
        <position position="74"/>
    </location>
</feature>